<evidence type="ECO:0000255" key="1">
    <source>
        <dbReference type="HAMAP-Rule" id="MF_00016"/>
    </source>
</evidence>
<reference key="1">
    <citation type="journal article" date="2007" name="Nat. Biotechnol.">
        <title>Genome sequence and identification of candidate vaccine antigens from the animal pathogen Dichelobacter nodosus.</title>
        <authorList>
            <person name="Myers G.S.A."/>
            <person name="Parker D."/>
            <person name="Al-Hasani K."/>
            <person name="Kennan R.M."/>
            <person name="Seemann T."/>
            <person name="Ren Q."/>
            <person name="Badger J.H."/>
            <person name="Selengut J.D."/>
            <person name="Deboy R.T."/>
            <person name="Tettelin H."/>
            <person name="Boyce J.D."/>
            <person name="McCarl V.P."/>
            <person name="Han X."/>
            <person name="Nelson W.C."/>
            <person name="Madupu R."/>
            <person name="Mohamoud Y."/>
            <person name="Holley T."/>
            <person name="Fedorova N."/>
            <person name="Khouri H."/>
            <person name="Bottomley S.P."/>
            <person name="Whittington R.J."/>
            <person name="Adler B."/>
            <person name="Songer J.G."/>
            <person name="Rood J.I."/>
            <person name="Paulsen I.T."/>
        </authorList>
    </citation>
    <scope>NUCLEOTIDE SEQUENCE [LARGE SCALE GENOMIC DNA]</scope>
    <source>
        <strain>VCS1703A</strain>
    </source>
</reference>
<organism>
    <name type="scientific">Dichelobacter nodosus (strain VCS1703A)</name>
    <dbReference type="NCBI Taxonomy" id="246195"/>
    <lineage>
        <taxon>Bacteria</taxon>
        <taxon>Pseudomonadati</taxon>
        <taxon>Pseudomonadota</taxon>
        <taxon>Gammaproteobacteria</taxon>
        <taxon>Cardiobacteriales</taxon>
        <taxon>Cardiobacteriaceae</taxon>
        <taxon>Dichelobacter</taxon>
    </lineage>
</organism>
<dbReference type="EC" id="3.6.4.-" evidence="1"/>
<dbReference type="EMBL" id="CP000513">
    <property type="protein sequence ID" value="ABQ13510.1"/>
    <property type="molecule type" value="Genomic_DNA"/>
</dbReference>
<dbReference type="RefSeq" id="WP_012031480.1">
    <property type="nucleotide sequence ID" value="NC_009446.1"/>
</dbReference>
<dbReference type="SMR" id="A5EXH6"/>
<dbReference type="STRING" id="246195.DNO_1176"/>
<dbReference type="KEGG" id="dno:DNO_1176"/>
<dbReference type="eggNOG" id="COG2255">
    <property type="taxonomic scope" value="Bacteria"/>
</dbReference>
<dbReference type="HOGENOM" id="CLU_055599_1_0_6"/>
<dbReference type="OrthoDB" id="9804478at2"/>
<dbReference type="Proteomes" id="UP000000248">
    <property type="component" value="Chromosome"/>
</dbReference>
<dbReference type="GO" id="GO:0005737">
    <property type="term" value="C:cytoplasm"/>
    <property type="evidence" value="ECO:0007669"/>
    <property type="project" value="UniProtKB-SubCell"/>
</dbReference>
<dbReference type="GO" id="GO:0048476">
    <property type="term" value="C:Holliday junction resolvase complex"/>
    <property type="evidence" value="ECO:0007669"/>
    <property type="project" value="UniProtKB-UniRule"/>
</dbReference>
<dbReference type="GO" id="GO:0005524">
    <property type="term" value="F:ATP binding"/>
    <property type="evidence" value="ECO:0007669"/>
    <property type="project" value="UniProtKB-UniRule"/>
</dbReference>
<dbReference type="GO" id="GO:0016887">
    <property type="term" value="F:ATP hydrolysis activity"/>
    <property type="evidence" value="ECO:0007669"/>
    <property type="project" value="InterPro"/>
</dbReference>
<dbReference type="GO" id="GO:0000400">
    <property type="term" value="F:four-way junction DNA binding"/>
    <property type="evidence" value="ECO:0007669"/>
    <property type="project" value="UniProtKB-UniRule"/>
</dbReference>
<dbReference type="GO" id="GO:0009378">
    <property type="term" value="F:four-way junction helicase activity"/>
    <property type="evidence" value="ECO:0007669"/>
    <property type="project" value="InterPro"/>
</dbReference>
<dbReference type="GO" id="GO:0006310">
    <property type="term" value="P:DNA recombination"/>
    <property type="evidence" value="ECO:0007669"/>
    <property type="project" value="UniProtKB-UniRule"/>
</dbReference>
<dbReference type="GO" id="GO:0006281">
    <property type="term" value="P:DNA repair"/>
    <property type="evidence" value="ECO:0007669"/>
    <property type="project" value="UniProtKB-UniRule"/>
</dbReference>
<dbReference type="CDD" id="cd00009">
    <property type="entry name" value="AAA"/>
    <property type="match status" value="1"/>
</dbReference>
<dbReference type="FunFam" id="3.40.50.300:FF:000073">
    <property type="entry name" value="Holliday junction ATP-dependent DNA helicase RuvB"/>
    <property type="match status" value="1"/>
</dbReference>
<dbReference type="Gene3D" id="1.10.8.60">
    <property type="match status" value="1"/>
</dbReference>
<dbReference type="Gene3D" id="3.40.50.300">
    <property type="entry name" value="P-loop containing nucleotide triphosphate hydrolases"/>
    <property type="match status" value="1"/>
</dbReference>
<dbReference type="Gene3D" id="1.10.10.10">
    <property type="entry name" value="Winged helix-like DNA-binding domain superfamily/Winged helix DNA-binding domain"/>
    <property type="match status" value="1"/>
</dbReference>
<dbReference type="HAMAP" id="MF_00016">
    <property type="entry name" value="DNA_HJ_migration_RuvB"/>
    <property type="match status" value="1"/>
</dbReference>
<dbReference type="InterPro" id="IPR003593">
    <property type="entry name" value="AAA+_ATPase"/>
</dbReference>
<dbReference type="InterPro" id="IPR041445">
    <property type="entry name" value="AAA_lid_4"/>
</dbReference>
<dbReference type="InterPro" id="IPR004605">
    <property type="entry name" value="DNA_helicase_Holl-junc_RuvB"/>
</dbReference>
<dbReference type="InterPro" id="IPR027417">
    <property type="entry name" value="P-loop_NTPase"/>
</dbReference>
<dbReference type="InterPro" id="IPR008824">
    <property type="entry name" value="RuvB-like_N"/>
</dbReference>
<dbReference type="InterPro" id="IPR008823">
    <property type="entry name" value="RuvB_C"/>
</dbReference>
<dbReference type="InterPro" id="IPR036388">
    <property type="entry name" value="WH-like_DNA-bd_sf"/>
</dbReference>
<dbReference type="InterPro" id="IPR036390">
    <property type="entry name" value="WH_DNA-bd_sf"/>
</dbReference>
<dbReference type="NCBIfam" id="NF000868">
    <property type="entry name" value="PRK00080.1"/>
    <property type="match status" value="1"/>
</dbReference>
<dbReference type="NCBIfam" id="TIGR00635">
    <property type="entry name" value="ruvB"/>
    <property type="match status" value="1"/>
</dbReference>
<dbReference type="PANTHER" id="PTHR42848">
    <property type="match status" value="1"/>
</dbReference>
<dbReference type="PANTHER" id="PTHR42848:SF1">
    <property type="entry name" value="HOLLIDAY JUNCTION BRANCH MIGRATION COMPLEX SUBUNIT RUVB"/>
    <property type="match status" value="1"/>
</dbReference>
<dbReference type="Pfam" id="PF17864">
    <property type="entry name" value="AAA_lid_4"/>
    <property type="match status" value="1"/>
</dbReference>
<dbReference type="Pfam" id="PF05491">
    <property type="entry name" value="RuvB_C"/>
    <property type="match status" value="1"/>
</dbReference>
<dbReference type="Pfam" id="PF05496">
    <property type="entry name" value="RuvB_N"/>
    <property type="match status" value="1"/>
</dbReference>
<dbReference type="SMART" id="SM00382">
    <property type="entry name" value="AAA"/>
    <property type="match status" value="1"/>
</dbReference>
<dbReference type="SUPFAM" id="SSF52540">
    <property type="entry name" value="P-loop containing nucleoside triphosphate hydrolases"/>
    <property type="match status" value="1"/>
</dbReference>
<dbReference type="SUPFAM" id="SSF46785">
    <property type="entry name" value="Winged helix' DNA-binding domain"/>
    <property type="match status" value="1"/>
</dbReference>
<keyword id="KW-0067">ATP-binding</keyword>
<keyword id="KW-0963">Cytoplasm</keyword>
<keyword id="KW-0227">DNA damage</keyword>
<keyword id="KW-0233">DNA recombination</keyword>
<keyword id="KW-0234">DNA repair</keyword>
<keyword id="KW-0238">DNA-binding</keyword>
<keyword id="KW-0378">Hydrolase</keyword>
<keyword id="KW-0547">Nucleotide-binding</keyword>
<keyword id="KW-1185">Reference proteome</keyword>
<accession>A5EXH6</accession>
<proteinExistence type="inferred from homology"/>
<sequence length="338" mass="37429">MIESDRLVSGKARSEEQVIERAVRPKRLTDYVGQESLKAQLSIFIEAALKRQEALDHVLLFGPPGLGKTTLAAIIAFELGVGLRQTSGPILDKAGDLAALLTNLEPHDVLFIDEIHRLSPAVEEVLYPAMEDYQIDIMIGEGPAARSIKLDLPPFTLIGATTRSGLLTAPLRDRFGISHHLQYYHHDELTQIVMRSAKLFEVAIDKEGAEEIGRRSRGTPRIANRLLRRVRDYAQVRGDGMITKALADEALELLAVDHLGFDALDRRMLLCLVEYFGGGPTGIDTLAVSVGEERGTLEDVVEPYLIQQGFIQRTPRGRVATELAYQYLNIEVPDGRNS</sequence>
<gene>
    <name evidence="1" type="primary">ruvB</name>
    <name type="ordered locus">DNO_1176</name>
</gene>
<protein>
    <recommendedName>
        <fullName evidence="1">Holliday junction branch migration complex subunit RuvB</fullName>
        <ecNumber evidence="1">3.6.4.-</ecNumber>
    </recommendedName>
</protein>
<feature type="chain" id="PRO_1000001398" description="Holliday junction branch migration complex subunit RuvB">
    <location>
        <begin position="1"/>
        <end position="338"/>
    </location>
</feature>
<feature type="region of interest" description="Large ATPase domain (RuvB-L)" evidence="1">
    <location>
        <begin position="4"/>
        <end position="184"/>
    </location>
</feature>
<feature type="region of interest" description="Small ATPAse domain (RuvB-S)" evidence="1">
    <location>
        <begin position="185"/>
        <end position="255"/>
    </location>
</feature>
<feature type="region of interest" description="Head domain (RuvB-H)" evidence="1">
    <location>
        <begin position="258"/>
        <end position="338"/>
    </location>
</feature>
<feature type="binding site" evidence="1">
    <location>
        <position position="24"/>
    </location>
    <ligand>
        <name>ATP</name>
        <dbReference type="ChEBI" id="CHEBI:30616"/>
    </ligand>
</feature>
<feature type="binding site" evidence="1">
    <location>
        <position position="65"/>
    </location>
    <ligand>
        <name>ATP</name>
        <dbReference type="ChEBI" id="CHEBI:30616"/>
    </ligand>
</feature>
<feature type="binding site" evidence="1">
    <location>
        <position position="68"/>
    </location>
    <ligand>
        <name>ATP</name>
        <dbReference type="ChEBI" id="CHEBI:30616"/>
    </ligand>
</feature>
<feature type="binding site" evidence="1">
    <location>
        <position position="69"/>
    </location>
    <ligand>
        <name>ATP</name>
        <dbReference type="ChEBI" id="CHEBI:30616"/>
    </ligand>
</feature>
<feature type="binding site" evidence="1">
    <location>
        <position position="69"/>
    </location>
    <ligand>
        <name>Mg(2+)</name>
        <dbReference type="ChEBI" id="CHEBI:18420"/>
    </ligand>
</feature>
<feature type="binding site" evidence="1">
    <location>
        <position position="70"/>
    </location>
    <ligand>
        <name>ATP</name>
        <dbReference type="ChEBI" id="CHEBI:30616"/>
    </ligand>
</feature>
<feature type="binding site" evidence="1">
    <location>
        <begin position="131"/>
        <end position="133"/>
    </location>
    <ligand>
        <name>ATP</name>
        <dbReference type="ChEBI" id="CHEBI:30616"/>
    </ligand>
</feature>
<feature type="binding site" evidence="1">
    <location>
        <position position="174"/>
    </location>
    <ligand>
        <name>ATP</name>
        <dbReference type="ChEBI" id="CHEBI:30616"/>
    </ligand>
</feature>
<feature type="binding site" evidence="1">
    <location>
        <position position="184"/>
    </location>
    <ligand>
        <name>ATP</name>
        <dbReference type="ChEBI" id="CHEBI:30616"/>
    </ligand>
</feature>
<feature type="binding site" evidence="1">
    <location>
        <position position="221"/>
    </location>
    <ligand>
        <name>ATP</name>
        <dbReference type="ChEBI" id="CHEBI:30616"/>
    </ligand>
</feature>
<feature type="binding site" evidence="1">
    <location>
        <position position="294"/>
    </location>
    <ligand>
        <name>DNA</name>
        <dbReference type="ChEBI" id="CHEBI:16991"/>
    </ligand>
</feature>
<feature type="binding site" evidence="1">
    <location>
        <position position="313"/>
    </location>
    <ligand>
        <name>DNA</name>
        <dbReference type="ChEBI" id="CHEBI:16991"/>
    </ligand>
</feature>
<feature type="binding site" evidence="1">
    <location>
        <position position="318"/>
    </location>
    <ligand>
        <name>DNA</name>
        <dbReference type="ChEBI" id="CHEBI:16991"/>
    </ligand>
</feature>
<comment type="function">
    <text evidence="1">The RuvA-RuvB-RuvC complex processes Holliday junction (HJ) DNA during genetic recombination and DNA repair, while the RuvA-RuvB complex plays an important role in the rescue of blocked DNA replication forks via replication fork reversal (RFR). RuvA specifically binds to HJ cruciform DNA, conferring on it an open structure. The RuvB hexamer acts as an ATP-dependent pump, pulling dsDNA into and through the RuvAB complex. RuvB forms 2 homohexamers on either side of HJ DNA bound by 1 or 2 RuvA tetramers; 4 subunits per hexamer contact DNA at a time. Coordinated motions by a converter formed by DNA-disengaged RuvB subunits stimulates ATP hydrolysis and nucleotide exchange. Immobilization of the converter enables RuvB to convert the ATP-contained energy into a lever motion, pulling 2 nucleotides of DNA out of the RuvA tetramer per ATP hydrolyzed, thus driving DNA branch migration. The RuvB motors rotate together with the DNA substrate, which together with the progressing nucleotide cycle form the mechanistic basis for DNA recombination by continuous HJ branch migration. Branch migration allows RuvC to scan DNA until it finds its consensus sequence, where it cleaves and resolves cruciform DNA.</text>
</comment>
<comment type="catalytic activity">
    <reaction evidence="1">
        <text>ATP + H2O = ADP + phosphate + H(+)</text>
        <dbReference type="Rhea" id="RHEA:13065"/>
        <dbReference type="ChEBI" id="CHEBI:15377"/>
        <dbReference type="ChEBI" id="CHEBI:15378"/>
        <dbReference type="ChEBI" id="CHEBI:30616"/>
        <dbReference type="ChEBI" id="CHEBI:43474"/>
        <dbReference type="ChEBI" id="CHEBI:456216"/>
    </reaction>
</comment>
<comment type="subunit">
    <text evidence="1">Homohexamer. Forms an RuvA(8)-RuvB(12)-Holliday junction (HJ) complex. HJ DNA is sandwiched between 2 RuvA tetramers; dsDNA enters through RuvA and exits via RuvB. An RuvB hexamer assembles on each DNA strand where it exits the tetramer. Each RuvB hexamer is contacted by two RuvA subunits (via domain III) on 2 adjacent RuvB subunits; this complex drives branch migration. In the full resolvosome a probable DNA-RuvA(4)-RuvB(12)-RuvC(2) complex forms which resolves the HJ.</text>
</comment>
<comment type="subcellular location">
    <subcellularLocation>
        <location evidence="1">Cytoplasm</location>
    </subcellularLocation>
</comment>
<comment type="domain">
    <text evidence="1">Has 3 domains, the large (RuvB-L) and small ATPase (RuvB-S) domains and the C-terminal head (RuvB-H) domain. The head domain binds DNA, while the ATPase domains jointly bind ATP, ADP or are empty depending on the state of the subunit in the translocation cycle. During a single DNA translocation step the structure of each domain remains the same, but their relative positions change.</text>
</comment>
<comment type="similarity">
    <text evidence="1">Belongs to the RuvB family.</text>
</comment>
<name>RUVB_DICNV</name>